<protein>
    <recommendedName>
        <fullName evidence="1">Transcription antitermination protein NusB</fullName>
    </recommendedName>
    <alternativeName>
        <fullName evidence="1">Antitermination factor NusB</fullName>
    </alternativeName>
</protein>
<keyword id="KW-1185">Reference proteome</keyword>
<keyword id="KW-0694">RNA-binding</keyword>
<keyword id="KW-0804">Transcription</keyword>
<keyword id="KW-0889">Transcription antitermination</keyword>
<keyword id="KW-0805">Transcription regulation</keyword>
<dbReference type="EMBL" id="CP000822">
    <property type="protein sequence ID" value="ABV13851.1"/>
    <property type="molecule type" value="Genomic_DNA"/>
</dbReference>
<dbReference type="RefSeq" id="WP_000801129.1">
    <property type="nucleotide sequence ID" value="NC_009792.1"/>
</dbReference>
<dbReference type="BMRB" id="A8AK38"/>
<dbReference type="SMR" id="A8AK38"/>
<dbReference type="STRING" id="290338.CKO_02745"/>
<dbReference type="GeneID" id="89550189"/>
<dbReference type="KEGG" id="cko:CKO_02745"/>
<dbReference type="HOGENOM" id="CLU_087843_4_1_6"/>
<dbReference type="OrthoDB" id="9789556at2"/>
<dbReference type="Proteomes" id="UP000008148">
    <property type="component" value="Chromosome"/>
</dbReference>
<dbReference type="GO" id="GO:0005829">
    <property type="term" value="C:cytosol"/>
    <property type="evidence" value="ECO:0007669"/>
    <property type="project" value="TreeGrafter"/>
</dbReference>
<dbReference type="GO" id="GO:0003723">
    <property type="term" value="F:RNA binding"/>
    <property type="evidence" value="ECO:0007669"/>
    <property type="project" value="UniProtKB-UniRule"/>
</dbReference>
<dbReference type="GO" id="GO:0006353">
    <property type="term" value="P:DNA-templated transcription termination"/>
    <property type="evidence" value="ECO:0007669"/>
    <property type="project" value="UniProtKB-UniRule"/>
</dbReference>
<dbReference type="GO" id="GO:0031564">
    <property type="term" value="P:transcription antitermination"/>
    <property type="evidence" value="ECO:0007669"/>
    <property type="project" value="UniProtKB-KW"/>
</dbReference>
<dbReference type="CDD" id="cd00619">
    <property type="entry name" value="Terminator_NusB"/>
    <property type="match status" value="1"/>
</dbReference>
<dbReference type="FunFam" id="1.10.940.10:FF:000001">
    <property type="entry name" value="Transcription antitermination factor NusB"/>
    <property type="match status" value="1"/>
</dbReference>
<dbReference type="Gene3D" id="1.10.940.10">
    <property type="entry name" value="NusB-like"/>
    <property type="match status" value="1"/>
</dbReference>
<dbReference type="HAMAP" id="MF_00073">
    <property type="entry name" value="NusB"/>
    <property type="match status" value="1"/>
</dbReference>
<dbReference type="InterPro" id="IPR035926">
    <property type="entry name" value="NusB-like_sf"/>
</dbReference>
<dbReference type="InterPro" id="IPR011605">
    <property type="entry name" value="NusB_fam"/>
</dbReference>
<dbReference type="InterPro" id="IPR006027">
    <property type="entry name" value="NusB_RsmB_TIM44"/>
</dbReference>
<dbReference type="NCBIfam" id="TIGR01951">
    <property type="entry name" value="nusB"/>
    <property type="match status" value="1"/>
</dbReference>
<dbReference type="PANTHER" id="PTHR11078:SF3">
    <property type="entry name" value="ANTITERMINATION NUSB DOMAIN-CONTAINING PROTEIN"/>
    <property type="match status" value="1"/>
</dbReference>
<dbReference type="PANTHER" id="PTHR11078">
    <property type="entry name" value="N UTILIZATION SUBSTANCE PROTEIN B-RELATED"/>
    <property type="match status" value="1"/>
</dbReference>
<dbReference type="Pfam" id="PF01029">
    <property type="entry name" value="NusB"/>
    <property type="match status" value="1"/>
</dbReference>
<dbReference type="SUPFAM" id="SSF48013">
    <property type="entry name" value="NusB-like"/>
    <property type="match status" value="1"/>
</dbReference>
<feature type="chain" id="PRO_1000023726" description="Transcription antitermination protein NusB">
    <location>
        <begin position="1"/>
        <end position="139"/>
    </location>
</feature>
<gene>
    <name evidence="1" type="primary">nusB</name>
    <name type="ordered locus">CKO_02745</name>
</gene>
<name>NUSB_CITK8</name>
<comment type="function">
    <text evidence="1">Involved in transcription antitermination. Required for transcription of ribosomal RNA (rRNA) genes. Binds specifically to the boxA antiterminator sequence of the ribosomal RNA (rrn) operons.</text>
</comment>
<comment type="similarity">
    <text evidence="1">Belongs to the NusB family.</text>
</comment>
<sequence length="139" mass="15689">MKPAARRRARECAVQALYSWQLSQNDIADVEYQFLAEQDVKDVDVLYFRELLSGVATNSAYLDGLMKPYLSRLLEELGQVEKAVLRIALFELSKRSDVPYKVAINEAIELAKTFGAEDSHKFVNGVLDKAAPVIRPNKK</sequence>
<evidence type="ECO:0000255" key="1">
    <source>
        <dbReference type="HAMAP-Rule" id="MF_00073"/>
    </source>
</evidence>
<accession>A8AK38</accession>
<organism>
    <name type="scientific">Citrobacter koseri (strain ATCC BAA-895 / CDC 4225-83 / SGSC4696)</name>
    <dbReference type="NCBI Taxonomy" id="290338"/>
    <lineage>
        <taxon>Bacteria</taxon>
        <taxon>Pseudomonadati</taxon>
        <taxon>Pseudomonadota</taxon>
        <taxon>Gammaproteobacteria</taxon>
        <taxon>Enterobacterales</taxon>
        <taxon>Enterobacteriaceae</taxon>
        <taxon>Citrobacter</taxon>
    </lineage>
</organism>
<proteinExistence type="inferred from homology"/>
<reference key="1">
    <citation type="submission" date="2007-08" db="EMBL/GenBank/DDBJ databases">
        <authorList>
            <consortium name="The Citrobacter koseri Genome Sequencing Project"/>
            <person name="McClelland M."/>
            <person name="Sanderson E.K."/>
            <person name="Porwollik S."/>
            <person name="Spieth J."/>
            <person name="Clifton W.S."/>
            <person name="Latreille P."/>
            <person name="Courtney L."/>
            <person name="Wang C."/>
            <person name="Pepin K."/>
            <person name="Bhonagiri V."/>
            <person name="Nash W."/>
            <person name="Johnson M."/>
            <person name="Thiruvilangam P."/>
            <person name="Wilson R."/>
        </authorList>
    </citation>
    <scope>NUCLEOTIDE SEQUENCE [LARGE SCALE GENOMIC DNA]</scope>
    <source>
        <strain>ATCC BAA-895 / CDC 4225-83 / SGSC4696</strain>
    </source>
</reference>